<gene>
    <name type="primary">ssb2</name>
    <name type="ordered locus">alr7579</name>
</gene>
<proteinExistence type="inferred from homology"/>
<sequence length="127" mass="14043">MNYINKVMLVGRCGQEPDLKFFESGAVKASISIAVRPPYRSEQALWFDLVAWGNQAEVIGNYVRKGTQIAITGEFGFDRWADKNSGTMRQKPVITINTIELLGSPRKEESTSTSAPNETQAVANANF</sequence>
<name>SSB2_NOSS1</name>
<protein>
    <recommendedName>
        <fullName evidence="1">Single-stranded DNA-binding protein 2</fullName>
        <shortName evidence="1">SSB 2</shortName>
    </recommendedName>
</protein>
<keyword id="KW-0238">DNA-binding</keyword>
<keyword id="KW-0614">Plasmid</keyword>
<keyword id="KW-1185">Reference proteome</keyword>
<feature type="chain" id="PRO_0000095998" description="Single-stranded DNA-binding protein 2">
    <location>
        <begin position="1"/>
        <end position="127"/>
    </location>
</feature>
<feature type="domain" description="SSB" evidence="1">
    <location>
        <begin position="4"/>
        <end position="103"/>
    </location>
</feature>
<feature type="region of interest" description="Disordered" evidence="2">
    <location>
        <begin position="104"/>
        <end position="127"/>
    </location>
</feature>
<feature type="compositionally biased region" description="Polar residues" evidence="2">
    <location>
        <begin position="111"/>
        <end position="127"/>
    </location>
</feature>
<geneLocation type="plasmid">
    <name>pCC7120beta</name>
</geneLocation>
<evidence type="ECO:0000255" key="1">
    <source>
        <dbReference type="HAMAP-Rule" id="MF_00984"/>
    </source>
</evidence>
<evidence type="ECO:0000256" key="2">
    <source>
        <dbReference type="SAM" id="MobiDB-lite"/>
    </source>
</evidence>
<accession>Q8ZSD2</accession>
<comment type="subunit">
    <text evidence="1">Homotetramer.</text>
</comment>
<organism>
    <name type="scientific">Nostoc sp. (strain PCC 7120 / SAG 25.82 / UTEX 2576)</name>
    <dbReference type="NCBI Taxonomy" id="103690"/>
    <lineage>
        <taxon>Bacteria</taxon>
        <taxon>Bacillati</taxon>
        <taxon>Cyanobacteriota</taxon>
        <taxon>Cyanophyceae</taxon>
        <taxon>Nostocales</taxon>
        <taxon>Nostocaceae</taxon>
        <taxon>Nostoc</taxon>
    </lineage>
</organism>
<reference key="1">
    <citation type="journal article" date="2001" name="DNA Res.">
        <title>Complete genomic sequence of the filamentous nitrogen-fixing cyanobacterium Anabaena sp. strain PCC 7120.</title>
        <authorList>
            <person name="Kaneko T."/>
            <person name="Nakamura Y."/>
            <person name="Wolk C.P."/>
            <person name="Kuritz T."/>
            <person name="Sasamoto S."/>
            <person name="Watanabe A."/>
            <person name="Iriguchi M."/>
            <person name="Ishikawa A."/>
            <person name="Kawashima K."/>
            <person name="Kimura T."/>
            <person name="Kishida Y."/>
            <person name="Kohara M."/>
            <person name="Matsumoto M."/>
            <person name="Matsuno A."/>
            <person name="Muraki A."/>
            <person name="Nakazaki N."/>
            <person name="Shimpo S."/>
            <person name="Sugimoto M."/>
            <person name="Takazawa M."/>
            <person name="Yamada M."/>
            <person name="Yasuda M."/>
            <person name="Tabata S."/>
        </authorList>
    </citation>
    <scope>NUCLEOTIDE SEQUENCE [LARGE SCALE GENOMIC DNA]</scope>
    <source>
        <strain>PCC 7120 / SAG 25.82 / UTEX 2576</strain>
    </source>
</reference>
<dbReference type="EMBL" id="AP003602">
    <property type="protein sequence ID" value="BAB77222.1"/>
    <property type="molecule type" value="Genomic_DNA"/>
</dbReference>
<dbReference type="PIR" id="AH2536">
    <property type="entry name" value="AH2536"/>
</dbReference>
<dbReference type="SMR" id="Q8ZSD2"/>
<dbReference type="KEGG" id="ana:alr7579"/>
<dbReference type="OrthoDB" id="9809878at2"/>
<dbReference type="Proteomes" id="UP000002483">
    <property type="component" value="Plasmid pCC7120beta"/>
</dbReference>
<dbReference type="GO" id="GO:0009295">
    <property type="term" value="C:nucleoid"/>
    <property type="evidence" value="ECO:0007669"/>
    <property type="project" value="TreeGrafter"/>
</dbReference>
<dbReference type="GO" id="GO:0003697">
    <property type="term" value="F:single-stranded DNA binding"/>
    <property type="evidence" value="ECO:0007669"/>
    <property type="project" value="UniProtKB-UniRule"/>
</dbReference>
<dbReference type="GO" id="GO:0006260">
    <property type="term" value="P:DNA replication"/>
    <property type="evidence" value="ECO:0007669"/>
    <property type="project" value="InterPro"/>
</dbReference>
<dbReference type="CDD" id="cd04496">
    <property type="entry name" value="SSB_OBF"/>
    <property type="match status" value="1"/>
</dbReference>
<dbReference type="Gene3D" id="2.40.50.140">
    <property type="entry name" value="Nucleic acid-binding proteins"/>
    <property type="match status" value="1"/>
</dbReference>
<dbReference type="HAMAP" id="MF_00984">
    <property type="entry name" value="SSB"/>
    <property type="match status" value="1"/>
</dbReference>
<dbReference type="InterPro" id="IPR012340">
    <property type="entry name" value="NA-bd_OB-fold"/>
</dbReference>
<dbReference type="InterPro" id="IPR000424">
    <property type="entry name" value="Primosome_PriB/ssb"/>
</dbReference>
<dbReference type="InterPro" id="IPR011344">
    <property type="entry name" value="ssDNA-bd"/>
</dbReference>
<dbReference type="NCBIfam" id="TIGR00621">
    <property type="entry name" value="ssb"/>
    <property type="match status" value="1"/>
</dbReference>
<dbReference type="PANTHER" id="PTHR10302">
    <property type="entry name" value="SINGLE-STRANDED DNA-BINDING PROTEIN"/>
    <property type="match status" value="1"/>
</dbReference>
<dbReference type="PANTHER" id="PTHR10302:SF0">
    <property type="entry name" value="SINGLE-STRANDED DNA-BINDING PROTEIN, MITOCHONDRIAL"/>
    <property type="match status" value="1"/>
</dbReference>
<dbReference type="Pfam" id="PF00436">
    <property type="entry name" value="SSB"/>
    <property type="match status" value="1"/>
</dbReference>
<dbReference type="PIRSF" id="PIRSF002070">
    <property type="entry name" value="SSB"/>
    <property type="match status" value="1"/>
</dbReference>
<dbReference type="SUPFAM" id="SSF50249">
    <property type="entry name" value="Nucleic acid-binding proteins"/>
    <property type="match status" value="1"/>
</dbReference>
<dbReference type="PROSITE" id="PS50935">
    <property type="entry name" value="SSB"/>
    <property type="match status" value="1"/>
</dbReference>